<comment type="function">
    <text evidence="1">Catalyzes the NADPH-dependent reduction of N-acetyl-5-glutamyl phosphate to yield N-acetyl-L-glutamate 5-semialdehyde.</text>
</comment>
<comment type="catalytic activity">
    <reaction evidence="1">
        <text>N-acetyl-L-glutamate 5-semialdehyde + phosphate + NADP(+) = N-acetyl-L-glutamyl 5-phosphate + NADPH + H(+)</text>
        <dbReference type="Rhea" id="RHEA:21588"/>
        <dbReference type="ChEBI" id="CHEBI:15378"/>
        <dbReference type="ChEBI" id="CHEBI:29123"/>
        <dbReference type="ChEBI" id="CHEBI:43474"/>
        <dbReference type="ChEBI" id="CHEBI:57783"/>
        <dbReference type="ChEBI" id="CHEBI:57936"/>
        <dbReference type="ChEBI" id="CHEBI:58349"/>
        <dbReference type="EC" id="1.2.1.38"/>
    </reaction>
</comment>
<comment type="pathway">
    <text evidence="1">Amino-acid biosynthesis; L-arginine biosynthesis; N(2)-acetyl-L-ornithine from L-glutamate: step 3/4.</text>
</comment>
<comment type="subcellular location">
    <subcellularLocation>
        <location evidence="1">Cytoplasm</location>
    </subcellularLocation>
</comment>
<comment type="similarity">
    <text evidence="1">Belongs to the NAGSA dehydrogenase family. Type 1 subfamily.</text>
</comment>
<evidence type="ECO:0000255" key="1">
    <source>
        <dbReference type="HAMAP-Rule" id="MF_00150"/>
    </source>
</evidence>
<keyword id="KW-0028">Amino-acid biosynthesis</keyword>
<keyword id="KW-0055">Arginine biosynthesis</keyword>
<keyword id="KW-0963">Cytoplasm</keyword>
<keyword id="KW-0521">NADP</keyword>
<keyword id="KW-0560">Oxidoreductase</keyword>
<sequence>MAQASNSRIKVGIVGGTGYTGVELLRLLSQHPHVALTAITSRKEDGLPVADMYPNLRGRVKLAFSAPEKASLTDCDVVFFATPHGVAMAQAAELLAAGTRVIDLAADFRLQDTAVFERWYKIPHTCPDILADSVYGLVELNREAISKARVIGNPGCYPTTVLLGLAPLIEGGKQLVDVQTLIADCKSGVSGAGRKAEVGSLFSEASDNFKAYGVAGHRHQPEIVAQLEKLAGGKVGLTFVPHLVPMIRGMFSTLYARILPQARDTDFQALFEARYADEPFVDVMPAGSLPETRSVRASNNLRISVQRPGGGDQLVILVVQDNLVKGASGQAVQNMNLMFGLPESAGLDQVAILP</sequence>
<proteinExistence type="inferred from homology"/>
<protein>
    <recommendedName>
        <fullName evidence="1">N-acetyl-gamma-glutamyl-phosphate reductase</fullName>
        <shortName evidence="1">AGPR</shortName>
        <ecNumber evidence="1">1.2.1.38</ecNumber>
    </recommendedName>
    <alternativeName>
        <fullName evidence="1">N-acetyl-glutamate semialdehyde dehydrogenase</fullName>
        <shortName evidence="1">NAGSA dehydrogenase</shortName>
    </alternativeName>
</protein>
<gene>
    <name evidence="1" type="primary">argC</name>
    <name type="ordered locus">BB4355</name>
</gene>
<feature type="chain" id="PRO_0000112388" description="N-acetyl-gamma-glutamyl-phosphate reductase">
    <location>
        <begin position="1"/>
        <end position="354"/>
    </location>
</feature>
<feature type="active site" evidence="1">
    <location>
        <position position="156"/>
    </location>
</feature>
<reference key="1">
    <citation type="journal article" date="2003" name="Nat. Genet.">
        <title>Comparative analysis of the genome sequences of Bordetella pertussis, Bordetella parapertussis and Bordetella bronchiseptica.</title>
        <authorList>
            <person name="Parkhill J."/>
            <person name="Sebaihia M."/>
            <person name="Preston A."/>
            <person name="Murphy L.D."/>
            <person name="Thomson N.R."/>
            <person name="Harris D.E."/>
            <person name="Holden M.T.G."/>
            <person name="Churcher C.M."/>
            <person name="Bentley S.D."/>
            <person name="Mungall K.L."/>
            <person name="Cerdeno-Tarraga A.-M."/>
            <person name="Temple L."/>
            <person name="James K.D."/>
            <person name="Harris B."/>
            <person name="Quail M.A."/>
            <person name="Achtman M."/>
            <person name="Atkin R."/>
            <person name="Baker S."/>
            <person name="Basham D."/>
            <person name="Bason N."/>
            <person name="Cherevach I."/>
            <person name="Chillingworth T."/>
            <person name="Collins M."/>
            <person name="Cronin A."/>
            <person name="Davis P."/>
            <person name="Doggett J."/>
            <person name="Feltwell T."/>
            <person name="Goble A."/>
            <person name="Hamlin N."/>
            <person name="Hauser H."/>
            <person name="Holroyd S."/>
            <person name="Jagels K."/>
            <person name="Leather S."/>
            <person name="Moule S."/>
            <person name="Norberczak H."/>
            <person name="O'Neil S."/>
            <person name="Ormond D."/>
            <person name="Price C."/>
            <person name="Rabbinowitsch E."/>
            <person name="Rutter S."/>
            <person name="Sanders M."/>
            <person name="Saunders D."/>
            <person name="Seeger K."/>
            <person name="Sharp S."/>
            <person name="Simmonds M."/>
            <person name="Skelton J."/>
            <person name="Squares R."/>
            <person name="Squares S."/>
            <person name="Stevens K."/>
            <person name="Unwin L."/>
            <person name="Whitehead S."/>
            <person name="Barrell B.G."/>
            <person name="Maskell D.J."/>
        </authorList>
    </citation>
    <scope>NUCLEOTIDE SEQUENCE [LARGE SCALE GENOMIC DNA]</scope>
    <source>
        <strain>ATCC BAA-588 / NCTC 13252 / RB50</strain>
    </source>
</reference>
<dbReference type="EC" id="1.2.1.38" evidence="1"/>
<dbReference type="EMBL" id="BX640450">
    <property type="protein sequence ID" value="CAE34718.1"/>
    <property type="molecule type" value="Genomic_DNA"/>
</dbReference>
<dbReference type="RefSeq" id="WP_003814887.1">
    <property type="nucleotide sequence ID" value="NC_002927.3"/>
</dbReference>
<dbReference type="SMR" id="Q7WFC5"/>
<dbReference type="GeneID" id="93205682"/>
<dbReference type="KEGG" id="bbr:BB4355"/>
<dbReference type="eggNOG" id="COG0002">
    <property type="taxonomic scope" value="Bacteria"/>
</dbReference>
<dbReference type="HOGENOM" id="CLU_006384_0_1_4"/>
<dbReference type="UniPathway" id="UPA00068">
    <property type="reaction ID" value="UER00108"/>
</dbReference>
<dbReference type="Proteomes" id="UP000001027">
    <property type="component" value="Chromosome"/>
</dbReference>
<dbReference type="GO" id="GO:0005737">
    <property type="term" value="C:cytoplasm"/>
    <property type="evidence" value="ECO:0007669"/>
    <property type="project" value="UniProtKB-SubCell"/>
</dbReference>
<dbReference type="GO" id="GO:0003942">
    <property type="term" value="F:N-acetyl-gamma-glutamyl-phosphate reductase activity"/>
    <property type="evidence" value="ECO:0007669"/>
    <property type="project" value="UniProtKB-UniRule"/>
</dbReference>
<dbReference type="GO" id="GO:0051287">
    <property type="term" value="F:NAD binding"/>
    <property type="evidence" value="ECO:0007669"/>
    <property type="project" value="InterPro"/>
</dbReference>
<dbReference type="GO" id="GO:0070401">
    <property type="term" value="F:NADP+ binding"/>
    <property type="evidence" value="ECO:0007669"/>
    <property type="project" value="InterPro"/>
</dbReference>
<dbReference type="GO" id="GO:0006526">
    <property type="term" value="P:L-arginine biosynthetic process"/>
    <property type="evidence" value="ECO:0007669"/>
    <property type="project" value="UniProtKB-UniRule"/>
</dbReference>
<dbReference type="CDD" id="cd23934">
    <property type="entry name" value="AGPR_1_C"/>
    <property type="match status" value="1"/>
</dbReference>
<dbReference type="CDD" id="cd17895">
    <property type="entry name" value="AGPR_1_N"/>
    <property type="match status" value="1"/>
</dbReference>
<dbReference type="FunFam" id="3.30.360.10:FF:000014">
    <property type="entry name" value="N-acetyl-gamma-glutamyl-phosphate reductase"/>
    <property type="match status" value="1"/>
</dbReference>
<dbReference type="Gene3D" id="3.30.360.10">
    <property type="entry name" value="Dihydrodipicolinate Reductase, domain 2"/>
    <property type="match status" value="1"/>
</dbReference>
<dbReference type="Gene3D" id="3.40.50.720">
    <property type="entry name" value="NAD(P)-binding Rossmann-like Domain"/>
    <property type="match status" value="1"/>
</dbReference>
<dbReference type="HAMAP" id="MF_00150">
    <property type="entry name" value="ArgC_type1"/>
    <property type="match status" value="1"/>
</dbReference>
<dbReference type="InterPro" id="IPR023013">
    <property type="entry name" value="AGPR_AS"/>
</dbReference>
<dbReference type="InterPro" id="IPR000706">
    <property type="entry name" value="AGPR_type-1"/>
</dbReference>
<dbReference type="InterPro" id="IPR036291">
    <property type="entry name" value="NAD(P)-bd_dom_sf"/>
</dbReference>
<dbReference type="InterPro" id="IPR050085">
    <property type="entry name" value="NAGSA_dehydrogenase"/>
</dbReference>
<dbReference type="InterPro" id="IPR000534">
    <property type="entry name" value="Semialdehyde_DH_NAD-bd"/>
</dbReference>
<dbReference type="NCBIfam" id="TIGR01850">
    <property type="entry name" value="argC"/>
    <property type="match status" value="1"/>
</dbReference>
<dbReference type="PANTHER" id="PTHR32338:SF10">
    <property type="entry name" value="N-ACETYL-GAMMA-GLUTAMYL-PHOSPHATE REDUCTASE, CHLOROPLASTIC-RELATED"/>
    <property type="match status" value="1"/>
</dbReference>
<dbReference type="PANTHER" id="PTHR32338">
    <property type="entry name" value="N-ACETYL-GAMMA-GLUTAMYL-PHOSPHATE REDUCTASE, CHLOROPLASTIC-RELATED-RELATED"/>
    <property type="match status" value="1"/>
</dbReference>
<dbReference type="Pfam" id="PF01118">
    <property type="entry name" value="Semialdhyde_dh"/>
    <property type="match status" value="1"/>
</dbReference>
<dbReference type="Pfam" id="PF22698">
    <property type="entry name" value="Semialdhyde_dhC_1"/>
    <property type="match status" value="1"/>
</dbReference>
<dbReference type="SMART" id="SM00859">
    <property type="entry name" value="Semialdhyde_dh"/>
    <property type="match status" value="1"/>
</dbReference>
<dbReference type="SUPFAM" id="SSF55347">
    <property type="entry name" value="Glyceraldehyde-3-phosphate dehydrogenase-like, C-terminal domain"/>
    <property type="match status" value="1"/>
</dbReference>
<dbReference type="SUPFAM" id="SSF51735">
    <property type="entry name" value="NAD(P)-binding Rossmann-fold domains"/>
    <property type="match status" value="1"/>
</dbReference>
<dbReference type="PROSITE" id="PS01224">
    <property type="entry name" value="ARGC"/>
    <property type="match status" value="1"/>
</dbReference>
<name>ARGC_BORBR</name>
<organism>
    <name type="scientific">Bordetella bronchiseptica (strain ATCC BAA-588 / NCTC 13252 / RB50)</name>
    <name type="common">Alcaligenes bronchisepticus</name>
    <dbReference type="NCBI Taxonomy" id="257310"/>
    <lineage>
        <taxon>Bacteria</taxon>
        <taxon>Pseudomonadati</taxon>
        <taxon>Pseudomonadota</taxon>
        <taxon>Betaproteobacteria</taxon>
        <taxon>Burkholderiales</taxon>
        <taxon>Alcaligenaceae</taxon>
        <taxon>Bordetella</taxon>
    </lineage>
</organism>
<accession>Q7WFC5</accession>